<organism>
    <name type="scientific">Bos indicus</name>
    <name type="common">Zebu</name>
    <dbReference type="NCBI Taxonomy" id="9915"/>
    <lineage>
        <taxon>Eukaryota</taxon>
        <taxon>Metazoa</taxon>
        <taxon>Chordata</taxon>
        <taxon>Craniata</taxon>
        <taxon>Vertebrata</taxon>
        <taxon>Euteleostomi</taxon>
        <taxon>Mammalia</taxon>
        <taxon>Eutheria</taxon>
        <taxon>Laurasiatheria</taxon>
        <taxon>Artiodactyla</taxon>
        <taxon>Ruminantia</taxon>
        <taxon>Pecora</taxon>
        <taxon>Bovidae</taxon>
        <taxon>Bovinae</taxon>
        <taxon>Bos</taxon>
    </lineage>
</organism>
<comment type="function">
    <text evidence="1">Cytosolic glucose-6-phosphate dehydrogenase that catalyzes the first and rate-limiting step of the oxidative branch within the pentose phosphate pathway/shunt, an alternative route to glycolysis for the dissimilation of carbohydrates and a major source of reducing power and metabolic intermediates for fatty acid and nucleic acid biosynthetic processes.</text>
</comment>
<comment type="catalytic activity">
    <reaction evidence="1">
        <text>D-glucose 6-phosphate + NADP(+) = 6-phospho-D-glucono-1,5-lactone + NADPH + H(+)</text>
        <dbReference type="Rhea" id="RHEA:15841"/>
        <dbReference type="ChEBI" id="CHEBI:15378"/>
        <dbReference type="ChEBI" id="CHEBI:57783"/>
        <dbReference type="ChEBI" id="CHEBI:57955"/>
        <dbReference type="ChEBI" id="CHEBI:58349"/>
        <dbReference type="ChEBI" id="CHEBI:61548"/>
        <dbReference type="EC" id="1.1.1.49"/>
    </reaction>
    <physiologicalReaction direction="left-to-right" evidence="1">
        <dbReference type="Rhea" id="RHEA:15842"/>
    </physiologicalReaction>
</comment>
<comment type="pathway">
    <text evidence="1">Carbohydrate degradation; pentose phosphate pathway; D-ribulose 5-phosphate from D-glucose 6-phosphate (oxidative stage): step 1/3.</text>
</comment>
<comment type="subunit">
    <text evidence="1">Homotetramer; dimer of dimers. Interacts with SIRT2; the interaction is enhanced by H(2)O(2) treatment (By similarity). Forms a ternary complex with ALDOB and TP53; this interaction is direct. ALDOB stabilizes the complex inhibiting G6PD activity and keeping oxidative pentose phosphate metabolism in check.</text>
</comment>
<comment type="subcellular location">
    <subcellularLocation>
        <location evidence="1">Cytoplasm</location>
        <location evidence="1">Cytosol</location>
    </subcellularLocation>
    <subcellularLocation>
        <location evidence="1">Membrane</location>
        <topology evidence="1">Peripheral membrane protein</topology>
    </subcellularLocation>
</comment>
<comment type="PTM">
    <text evidence="1">Acetylated by ELP3 at Lys-403; acetylation inhibits its homodimerization and enzyme activity. Deacetylated by SIRT2 at Lys-403; deacetylation stimulates its enzyme activity (By similarity).</text>
</comment>
<comment type="similarity">
    <text evidence="2">Belongs to the glucose-6-phosphate dehydrogenase family.</text>
</comment>
<comment type="caution">
    <text evidence="2">Pro-263 is present instead of the conserved His which is expected to act as the active site proton acceptor.</text>
</comment>
<proteinExistence type="evidence at transcript level"/>
<dbReference type="EC" id="1.1.1.49" evidence="1"/>
<dbReference type="EMBL" id="AJ566767">
    <property type="protein sequence ID" value="CAD97761.1"/>
    <property type="molecule type" value="mRNA"/>
</dbReference>
<dbReference type="SMR" id="Q7YS37"/>
<dbReference type="UniPathway" id="UPA00115">
    <property type="reaction ID" value="UER00408"/>
</dbReference>
<dbReference type="GO" id="GO:0005829">
    <property type="term" value="C:cytosol"/>
    <property type="evidence" value="ECO:0007669"/>
    <property type="project" value="UniProtKB-SubCell"/>
</dbReference>
<dbReference type="GO" id="GO:0016020">
    <property type="term" value="C:membrane"/>
    <property type="evidence" value="ECO:0007669"/>
    <property type="project" value="UniProtKB-SubCell"/>
</dbReference>
<dbReference type="GO" id="GO:0004345">
    <property type="term" value="F:glucose-6-phosphate dehydrogenase activity"/>
    <property type="evidence" value="ECO:0000250"/>
    <property type="project" value="UniProtKB"/>
</dbReference>
<dbReference type="GO" id="GO:0050661">
    <property type="term" value="F:NADP binding"/>
    <property type="evidence" value="ECO:0007669"/>
    <property type="project" value="InterPro"/>
</dbReference>
<dbReference type="GO" id="GO:0051156">
    <property type="term" value="P:glucose 6-phosphate metabolic process"/>
    <property type="evidence" value="ECO:0000250"/>
    <property type="project" value="UniProtKB"/>
</dbReference>
<dbReference type="GO" id="GO:0006006">
    <property type="term" value="P:glucose metabolic process"/>
    <property type="evidence" value="ECO:0007669"/>
    <property type="project" value="UniProtKB-KW"/>
</dbReference>
<dbReference type="GO" id="GO:0006739">
    <property type="term" value="P:NADP metabolic process"/>
    <property type="evidence" value="ECO:0000250"/>
    <property type="project" value="UniProtKB"/>
</dbReference>
<dbReference type="GO" id="GO:0009051">
    <property type="term" value="P:pentose-phosphate shunt, oxidative branch"/>
    <property type="evidence" value="ECO:0007669"/>
    <property type="project" value="TreeGrafter"/>
</dbReference>
<dbReference type="FunFam" id="3.30.360.10:FF:000013">
    <property type="entry name" value="Glucose-6-phosphate 1-dehydrogenase"/>
    <property type="match status" value="1"/>
</dbReference>
<dbReference type="FunFam" id="3.40.50.720:FF:000111">
    <property type="entry name" value="Glucose-6-phosphate 1-dehydrogenase"/>
    <property type="match status" value="1"/>
</dbReference>
<dbReference type="Gene3D" id="3.30.360.10">
    <property type="entry name" value="Dihydrodipicolinate Reductase, domain 2"/>
    <property type="match status" value="1"/>
</dbReference>
<dbReference type="Gene3D" id="3.40.50.720">
    <property type="entry name" value="NAD(P)-binding Rossmann-like Domain"/>
    <property type="match status" value="1"/>
</dbReference>
<dbReference type="HAMAP" id="MF_00966">
    <property type="entry name" value="G6PD"/>
    <property type="match status" value="1"/>
</dbReference>
<dbReference type="InterPro" id="IPR001282">
    <property type="entry name" value="G6P_DH"/>
</dbReference>
<dbReference type="InterPro" id="IPR019796">
    <property type="entry name" value="G6P_DH_AS"/>
</dbReference>
<dbReference type="InterPro" id="IPR022675">
    <property type="entry name" value="G6P_DH_C"/>
</dbReference>
<dbReference type="InterPro" id="IPR022674">
    <property type="entry name" value="G6P_DH_NAD-bd"/>
</dbReference>
<dbReference type="InterPro" id="IPR036291">
    <property type="entry name" value="NAD(P)-bd_dom_sf"/>
</dbReference>
<dbReference type="NCBIfam" id="TIGR00871">
    <property type="entry name" value="zwf"/>
    <property type="match status" value="1"/>
</dbReference>
<dbReference type="PANTHER" id="PTHR23429:SF0">
    <property type="entry name" value="GLUCOSE-6-PHOSPHATE 1-DEHYDROGENASE"/>
    <property type="match status" value="1"/>
</dbReference>
<dbReference type="PANTHER" id="PTHR23429">
    <property type="entry name" value="GLUCOSE-6-PHOSPHATE 1-DEHYDROGENASE G6PD"/>
    <property type="match status" value="1"/>
</dbReference>
<dbReference type="Pfam" id="PF02781">
    <property type="entry name" value="G6PD_C"/>
    <property type="match status" value="1"/>
</dbReference>
<dbReference type="Pfam" id="PF00479">
    <property type="entry name" value="G6PD_N"/>
    <property type="match status" value="1"/>
</dbReference>
<dbReference type="PIRSF" id="PIRSF000110">
    <property type="entry name" value="G6PD"/>
    <property type="match status" value="1"/>
</dbReference>
<dbReference type="PRINTS" id="PR00079">
    <property type="entry name" value="G6PDHDRGNASE"/>
</dbReference>
<dbReference type="SUPFAM" id="SSF55347">
    <property type="entry name" value="Glyceraldehyde-3-phosphate dehydrogenase-like, C-terminal domain"/>
    <property type="match status" value="1"/>
</dbReference>
<dbReference type="SUPFAM" id="SSF51735">
    <property type="entry name" value="NAD(P)-binding Rossmann-fold domains"/>
    <property type="match status" value="1"/>
</dbReference>
<dbReference type="PROSITE" id="PS00069">
    <property type="entry name" value="G6P_DEHYDROGENASE"/>
    <property type="match status" value="1"/>
</dbReference>
<accession>Q7YS37</accession>
<keyword id="KW-0007">Acetylation</keyword>
<keyword id="KW-0119">Carbohydrate metabolism</keyword>
<keyword id="KW-0963">Cytoplasm</keyword>
<keyword id="KW-0313">Glucose metabolism</keyword>
<keyword id="KW-0379">Hydroxylation</keyword>
<keyword id="KW-0472">Membrane</keyword>
<keyword id="KW-0521">NADP</keyword>
<keyword id="KW-0560">Oxidoreductase</keyword>
<keyword id="KW-0597">Phosphoprotein</keyword>
<evidence type="ECO:0000250" key="1">
    <source>
        <dbReference type="UniProtKB" id="P11413"/>
    </source>
</evidence>
<evidence type="ECO:0000305" key="2"/>
<protein>
    <recommendedName>
        <fullName>Glucose-6-phosphate 1-dehydrogenase</fullName>
        <shortName>G6PD</shortName>
        <ecNumber evidence="1">1.1.1.49</ecNumber>
    </recommendedName>
</protein>
<gene>
    <name type="primary">G6PD</name>
</gene>
<feature type="initiator methionine" description="Removed" evidence="1">
    <location>
        <position position="1"/>
    </location>
</feature>
<feature type="chain" id="PRO_0000068080" description="Glucose-6-phosphate 1-dehydrogenase">
    <location>
        <begin position="2"/>
        <end position="515"/>
    </location>
</feature>
<feature type="binding site" evidence="1">
    <location>
        <begin position="38"/>
        <end position="45"/>
    </location>
    <ligand>
        <name>NADP(+)</name>
        <dbReference type="ChEBI" id="CHEBI:58349"/>
        <label>1</label>
    </ligand>
</feature>
<feature type="binding site" evidence="1">
    <location>
        <position position="147"/>
    </location>
    <ligand>
        <name>NADP(+)</name>
        <dbReference type="ChEBI" id="CHEBI:58349"/>
        <label>1</label>
    </ligand>
</feature>
<feature type="binding site" evidence="1">
    <location>
        <position position="171"/>
    </location>
    <ligand>
        <name>D-glucose 6-phosphate</name>
        <dbReference type="ChEBI" id="CHEBI:61548"/>
    </ligand>
</feature>
<feature type="binding site" evidence="1">
    <location>
        <position position="171"/>
    </location>
    <ligand>
        <name>NADP(+)</name>
        <dbReference type="ChEBI" id="CHEBI:58349"/>
        <label>1</label>
    </ligand>
</feature>
<feature type="binding site" evidence="1">
    <location>
        <begin position="201"/>
        <end position="205"/>
    </location>
    <ligand>
        <name>D-glucose 6-phosphate</name>
        <dbReference type="ChEBI" id="CHEBI:61548"/>
    </ligand>
</feature>
<feature type="binding site" evidence="1">
    <location>
        <position position="239"/>
    </location>
    <ligand>
        <name>D-glucose 6-phosphate</name>
        <dbReference type="ChEBI" id="CHEBI:61548"/>
    </ligand>
</feature>
<feature type="binding site" evidence="1">
    <location>
        <position position="258"/>
    </location>
    <ligand>
        <name>D-glucose 6-phosphate</name>
        <dbReference type="ChEBI" id="CHEBI:61548"/>
    </ligand>
</feature>
<feature type="binding site" evidence="1">
    <location>
        <position position="357"/>
    </location>
    <ligand>
        <name>NADP(+)</name>
        <dbReference type="ChEBI" id="CHEBI:58349"/>
        <label>2</label>
    </ligand>
</feature>
<feature type="binding site" evidence="1">
    <location>
        <position position="360"/>
    </location>
    <ligand>
        <name>D-glucose 6-phosphate</name>
        <dbReference type="ChEBI" id="CHEBI:61548"/>
    </ligand>
</feature>
<feature type="binding site" evidence="1">
    <location>
        <position position="365"/>
    </location>
    <ligand>
        <name>D-glucose 6-phosphate</name>
        <dbReference type="ChEBI" id="CHEBI:61548"/>
    </ligand>
</feature>
<feature type="binding site" evidence="1">
    <location>
        <position position="366"/>
    </location>
    <ligand>
        <name>NADP(+)</name>
        <dbReference type="ChEBI" id="CHEBI:58349"/>
        <label>2</label>
    </ligand>
</feature>
<feature type="binding site" evidence="1">
    <location>
        <position position="370"/>
    </location>
    <ligand>
        <name>NADP(+)</name>
        <dbReference type="ChEBI" id="CHEBI:58349"/>
        <label>2</label>
    </ligand>
</feature>
<feature type="binding site" evidence="1">
    <location>
        <position position="393"/>
    </location>
    <ligand>
        <name>NADP(+)</name>
        <dbReference type="ChEBI" id="CHEBI:58349"/>
        <label>2</label>
    </ligand>
</feature>
<feature type="binding site" evidence="1">
    <location>
        <position position="395"/>
    </location>
    <ligand>
        <name>D-glucose 6-phosphate</name>
        <dbReference type="ChEBI" id="CHEBI:61548"/>
    </ligand>
</feature>
<feature type="binding site" evidence="1">
    <location>
        <begin position="401"/>
        <end position="403"/>
    </location>
    <ligand>
        <name>NADP(+)</name>
        <dbReference type="ChEBI" id="CHEBI:58349"/>
        <label>2</label>
    </ligand>
</feature>
<feature type="binding site" evidence="1">
    <location>
        <begin position="421"/>
        <end position="423"/>
    </location>
    <ligand>
        <name>NADP(+)</name>
        <dbReference type="ChEBI" id="CHEBI:58349"/>
        <label>2</label>
    </ligand>
</feature>
<feature type="binding site" evidence="1">
    <location>
        <position position="487"/>
    </location>
    <ligand>
        <name>NADP(+)</name>
        <dbReference type="ChEBI" id="CHEBI:58349"/>
        <label>2</label>
    </ligand>
</feature>
<feature type="binding site" evidence="1">
    <location>
        <position position="503"/>
    </location>
    <ligand>
        <name>NADP(+)</name>
        <dbReference type="ChEBI" id="CHEBI:58349"/>
        <label>2</label>
    </ligand>
</feature>
<feature type="binding site" evidence="1">
    <location>
        <position position="509"/>
    </location>
    <ligand>
        <name>NADP(+)</name>
        <dbReference type="ChEBI" id="CHEBI:58349"/>
        <label>2</label>
    </ligand>
</feature>
<feature type="modified residue" description="N-acetylalanine" evidence="1">
    <location>
        <position position="2"/>
    </location>
</feature>
<feature type="modified residue" description="Phosphoserine" evidence="1">
    <location>
        <position position="8"/>
    </location>
</feature>
<feature type="modified residue" description="Phosphothreonine" evidence="1">
    <location>
        <position position="10"/>
    </location>
</feature>
<feature type="modified residue" description="N6-acetyllysine" evidence="1">
    <location>
        <position position="89"/>
    </location>
</feature>
<feature type="modified residue" description="N6-(2-hydroxyisobutyryl)lysine; alternate" evidence="1">
    <location>
        <position position="171"/>
    </location>
</feature>
<feature type="modified residue" description="N6-acetyllysine; alternate" evidence="1">
    <location>
        <position position="171"/>
    </location>
</feature>
<feature type="modified residue" description="N6-acetyllysine" evidence="1">
    <location>
        <position position="403"/>
    </location>
</feature>
<feature type="modified residue" description="N6-acetyllysine" evidence="1">
    <location>
        <position position="432"/>
    </location>
</feature>
<feature type="modified residue" description="N6-acetyllysine" evidence="1">
    <location>
        <position position="497"/>
    </location>
</feature>
<feature type="modified residue" description="Phosphotyrosine" evidence="1">
    <location>
        <position position="503"/>
    </location>
</feature>
<sequence length="515" mass="59584">MAEQVALSQTQTCGILWEELCQSYSFHQSDTHIFIIMGASGDLAKRNIYPTIWWLFQDGLLPKDTFIVGYTDSHFTVANIRKQSEPFFKSTPEEEPKLEEFFAHSSYMASQYDDVASYEHLNSGMNALHQGPQANCLFYLALLPSGYRTVTKNICDTCTSQTGWNRIIVEKPFGRDLQSSNQLSNHIASLFHEDQIYRIDHYLGKEVVQNLMVLRFVNRILGPIWNRDNIACMSFTFKEPFGTEGRWSYLSESGIIWEVMQNPLLQILCLVAMEKPISTNSDNIRDDKVRVLKCISKVQVSNVVLSQYMENPTEEGEATRGYPEDPRVPHGSTTDTFAAAVLYVENERWDGVPFILRCGKALNERKAEVRLQFRDVAGDIFRQQCKRNELVIRVQPNEAVYTKMMTKKPGMFFNPEESELDLTYGNRYKNVKFPDAYERLILDVFCGSQMHFVRSDELREAWRIFTPLLHHIEREKARPIPYVYGSRGPVEADELMKRVGFQYEGTYKWVNPHKL</sequence>
<reference key="1">
    <citation type="submission" date="2003-06" db="EMBL/GenBank/DDBJ databases">
        <title>Molecular characterization of g6pd in cattle.</title>
        <authorList>
            <person name="Ravi Kumar G.V.P.P.S."/>
            <person name="Sharma A."/>
            <person name="Suryanarayana V.V.S."/>
            <person name="Ravi Kumar P."/>
        </authorList>
    </citation>
    <scope>NUCLEOTIDE SEQUENCE [MRNA]</scope>
    <source>
        <tissue>Liver</tissue>
    </source>
</reference>
<name>G6PD_BOSIN</name>